<sequence>MSEKIIRGVKFGVLSPNEIRQMSVTAIITSEVYDEDGTPIEGGVMDPKLGVIEPGQKCPVCGNTLAGCPGHFGHIELIKPVIHIGYVKHIYDFLRSTCWRCGRIKIKEQDLERYKRIYNAIKLRWPSAARRLVEYIKKISIKNLECPHCGEKQFKIKLEKPYNFNEERNGSIVKLSPSEIRDRLERIPDSDVELLGYDPKSSRPEWMILTVLPVPPITIRPSITIESGIRAEDDLTHKLVDIIRLNERLKESIEAGAPQLIIEDLWDLLQYHVATYFDNEIPGLPPAKHRSGRPLRTLAQRLKGKEGRFRGNLSGKRVDFSARTVISPDPNLSIDEVGIPYTIARMLTVPERVTNINIERIRQYIINGPDKWPGANYVIKPDGRRIDLRYVKDRKELASSITAGYVVERHLVDGDVVLFNRQPSLHRISMMAHKVRVLPGRTFRLNLLDCPPYNADFDGDEMNLHVPQSEEAIAEARELMLVHKNIITPRYGGPIIGGGQDYISGAYLLSVKTTLLTVEEVATILGVTDFVGELGEPAILAPKPYYTGKQVISLFLPKDFNFHGPANISKGPRACKDEICPHDSFIVIKNGLLLEGVFDKKAIGNQQPESMLHWSIREYGTEYGKWLMDNVFKMFIRFLEMRGFTMTLEDITIPDEAQNEITTKIKEGYSQVDEYIRKFNEGQLEPIPGRTIEESLESYILDTLDKLRKVAGEIATKYLDPFNNVYIMAITGARGSELNITQMTALLGQQSVRGERIRRGYRERTLSLFKYGDIAPEARGFVKNSFMRGLSPYEMFFHAAGGREGLVDTAVKTSQSGYMQRRLINALSDLRIEYDGTVRSLYGDIVQVVYGDDAVHPMYSAHSKSVNVNRVIERVIGWKR</sequence>
<accession>P11512</accession>
<accession>Q4JAV7</accession>
<evidence type="ECO:0000255" key="1">
    <source>
        <dbReference type="HAMAP-Rule" id="MF_00863"/>
    </source>
</evidence>
<evidence type="ECO:0000269" key="2">
    <source>
    </source>
</evidence>
<evidence type="ECO:0000269" key="3">
    <source>
    </source>
</evidence>
<evidence type="ECO:0000269" key="4">
    <source>
    </source>
</evidence>
<evidence type="ECO:0000269" key="5">
    <source ref="4"/>
</evidence>
<evidence type="ECO:0000303" key="6">
    <source>
    </source>
</evidence>
<evidence type="ECO:0000303" key="7">
    <source>
    </source>
</evidence>
<evidence type="ECO:0000303" key="8">
    <source>
    </source>
</evidence>
<evidence type="ECO:0000303" key="9">
    <source ref="4"/>
</evidence>
<evidence type="ECO:0000305" key="10"/>
<evidence type="ECO:0000305" key="11">
    <source>
    </source>
</evidence>
<evidence type="ECO:0000305" key="12">
    <source ref="4"/>
</evidence>
<evidence type="ECO:0000312" key="13">
    <source>
        <dbReference type="PDB" id="7OK0"/>
    </source>
</evidence>
<evidence type="ECO:0000312" key="14">
    <source>
        <dbReference type="PDB" id="7OQ4"/>
    </source>
</evidence>
<evidence type="ECO:0000312" key="15">
    <source>
        <dbReference type="PDB" id="7OQY"/>
    </source>
</evidence>
<evidence type="ECO:0007829" key="16">
    <source>
        <dbReference type="PDB" id="7OK0"/>
    </source>
</evidence>
<evidence type="ECO:0007829" key="17">
    <source>
        <dbReference type="PDB" id="7OQ4"/>
    </source>
</evidence>
<evidence type="ECO:0007829" key="18">
    <source>
        <dbReference type="PDB" id="7OQY"/>
    </source>
</evidence>
<keyword id="KW-0002">3D-structure</keyword>
<keyword id="KW-0963">Cytoplasm</keyword>
<keyword id="KW-0238">DNA-binding</keyword>
<keyword id="KW-0240">DNA-directed RNA polymerase</keyword>
<keyword id="KW-0460">Magnesium</keyword>
<keyword id="KW-0479">Metal-binding</keyword>
<keyword id="KW-0548">Nucleotidyltransferase</keyword>
<keyword id="KW-1185">Reference proteome</keyword>
<keyword id="KW-0804">Transcription</keyword>
<keyword id="KW-0808">Transferase</keyword>
<keyword id="KW-0862">Zinc</keyword>
<organism>
    <name type="scientific">Sulfolobus acidocaldarius (strain ATCC 33909 / DSM 639 / JCM 8929 / NBRC 15157 / NCIMB 11770)</name>
    <dbReference type="NCBI Taxonomy" id="330779"/>
    <lineage>
        <taxon>Archaea</taxon>
        <taxon>Thermoproteota</taxon>
        <taxon>Thermoprotei</taxon>
        <taxon>Sulfolobales</taxon>
        <taxon>Sulfolobaceae</taxon>
        <taxon>Sulfolobus</taxon>
    </lineage>
</organism>
<proteinExistence type="evidence at protein level"/>
<protein>
    <recommendedName>
        <fullName evidence="1">DNA-directed RNA polymerase subunit Rpo1N</fullName>
        <ecNumber evidence="1 5">2.7.7.6</ecNumber>
    </recommendedName>
    <alternativeName>
        <fullName evidence="7">DNA-directed RNA polymerase subunit A</fullName>
    </alternativeName>
    <alternativeName>
        <fullName evidence="1 9">DNA-directed RNA polymerase subunit A'</fullName>
    </alternativeName>
    <alternativeName>
        <fullName evidence="8">Rpo1'</fullName>
    </alternativeName>
</protein>
<comment type="function">
    <text evidence="1 4 5">DNA-dependent RNA polymerase (RNAP) catalyzes the transcription of DNA into RNA using the four ribonucleoside triphosphates as substrates. Forms the clamp head domain.</text>
</comment>
<comment type="catalytic activity">
    <reaction evidence="1 5">
        <text>RNA(n) + a ribonucleoside 5'-triphosphate = RNA(n+1) + diphosphate</text>
        <dbReference type="Rhea" id="RHEA:21248"/>
        <dbReference type="Rhea" id="RHEA-COMP:14527"/>
        <dbReference type="Rhea" id="RHEA-COMP:17342"/>
        <dbReference type="ChEBI" id="CHEBI:33019"/>
        <dbReference type="ChEBI" id="CHEBI:61557"/>
        <dbReference type="ChEBI" id="CHEBI:140395"/>
        <dbReference type="EC" id="2.7.7.6"/>
    </reaction>
</comment>
<comment type="cofactor">
    <cofactor evidence="1 4 13 14 15">
        <name>Mg(2+)</name>
        <dbReference type="ChEBI" id="CHEBI:18420"/>
    </cofactor>
</comment>
<comment type="cofactor">
    <cofactor evidence="1 4 12 13 14 15">
        <name>Zn(2+)</name>
        <dbReference type="ChEBI" id="CHEBI:29105"/>
    </cofactor>
    <text evidence="4 13 14 15">Binds 3 Zn(2+) per subunit.</text>
</comment>
<comment type="activity regulation">
    <text evidence="4">(Microbial infection) Binds to viral protein RIP (AC Q3V4R7), which inhibits global transcription.</text>
</comment>
<comment type="subunit">
    <text evidence="2 4 5 13 14 15">Part of the 13-subunit RNA polymerase complex (PubMed:34535646). Interacts with TFS4 (PubMed:34535646).</text>
</comment>
<comment type="subunit">
    <text evidence="4">(Microbial infection) Binds viral protein RIP, which blocks global transcription.</text>
</comment>
<comment type="subcellular location">
    <subcellularLocation>
        <location evidence="1">Cytoplasm</location>
    </subcellularLocation>
</comment>
<comment type="miscellaneous">
    <text evidence="3">Corresponds to about the first two-thirds of the bacterial beta' subunit.</text>
</comment>
<comment type="similarity">
    <text evidence="1 11">Belongs to the RNA polymerase beta' chain family.</text>
</comment>
<name>RPO1N_SULAC</name>
<gene>
    <name evidence="1" type="primary">rpo1N</name>
    <name evidence="7" type="synonym">rpoA</name>
    <name evidence="1 6" type="synonym">rpoA1</name>
    <name type="ordered locus">Saci_0692</name>
</gene>
<feature type="chain" id="PRO_0000074007" description="DNA-directed RNA polymerase subunit Rpo1N">
    <location>
        <begin position="1"/>
        <end position="880"/>
    </location>
</feature>
<feature type="binding site" evidence="1 4 13 14 15">
    <location>
        <position position="58"/>
    </location>
    <ligand>
        <name>Zn(2+)</name>
        <dbReference type="ChEBI" id="CHEBI:29105"/>
        <label>1</label>
    </ligand>
</feature>
<feature type="binding site" evidence="1 4 13 14 15">
    <location>
        <position position="61"/>
    </location>
    <ligand>
        <name>Zn(2+)</name>
        <dbReference type="ChEBI" id="CHEBI:29105"/>
        <label>1</label>
    </ligand>
</feature>
<feature type="binding site" evidence="1 4 13 14 15">
    <location>
        <position position="68"/>
    </location>
    <ligand>
        <name>Zn(2+)</name>
        <dbReference type="ChEBI" id="CHEBI:29105"/>
        <label>1</label>
    </ligand>
</feature>
<feature type="binding site" evidence="1 4 13 14 15">
    <location>
        <position position="71"/>
    </location>
    <ligand>
        <name>Zn(2+)</name>
        <dbReference type="ChEBI" id="CHEBI:29105"/>
        <label>1</label>
    </ligand>
</feature>
<feature type="binding site" evidence="1 4 13 14 15">
    <location>
        <position position="98"/>
    </location>
    <ligand>
        <name>Zn(2+)</name>
        <dbReference type="ChEBI" id="CHEBI:29105"/>
        <label>2</label>
    </ligand>
</feature>
<feature type="binding site" evidence="1 4 13 14 15">
    <location>
        <position position="101"/>
    </location>
    <ligand>
        <name>Zn(2+)</name>
        <dbReference type="ChEBI" id="CHEBI:29105"/>
        <label>2</label>
    </ligand>
</feature>
<feature type="binding site" evidence="1 4 13 14 15">
    <location>
        <position position="146"/>
    </location>
    <ligand>
        <name>Zn(2+)</name>
        <dbReference type="ChEBI" id="CHEBI:29105"/>
        <label>2</label>
    </ligand>
</feature>
<feature type="binding site" evidence="1 4 13 14 15">
    <location>
        <position position="149"/>
    </location>
    <ligand>
        <name>Zn(2+)</name>
        <dbReference type="ChEBI" id="CHEBI:29105"/>
        <label>2</label>
    </ligand>
</feature>
<feature type="binding site" evidence="1 4 13 14">
    <location>
        <position position="456"/>
    </location>
    <ligand>
        <name>Mg(2+)</name>
        <dbReference type="ChEBI" id="CHEBI:18420"/>
    </ligand>
</feature>
<feature type="binding site" evidence="1 4 13 14 15">
    <location>
        <position position="458"/>
    </location>
    <ligand>
        <name>Mg(2+)</name>
        <dbReference type="ChEBI" id="CHEBI:18420"/>
    </ligand>
</feature>
<feature type="binding site" evidence="1 4 13 14 15">
    <location>
        <position position="460"/>
    </location>
    <ligand>
        <name>Mg(2+)</name>
        <dbReference type="ChEBI" id="CHEBI:18420"/>
    </ligand>
</feature>
<feature type="binding site" evidence="4 13 14 15">
    <location>
        <position position="573"/>
    </location>
    <ligand>
        <name>Zn(2+)</name>
        <dbReference type="ChEBI" id="CHEBI:29105"/>
        <label>3</label>
    </ligand>
</feature>
<feature type="binding site" evidence="4 13 15">
    <location>
        <position position="575"/>
    </location>
    <ligand>
        <name>Zn(2+)</name>
        <dbReference type="ChEBI" id="CHEBI:29105"/>
        <label>3</label>
    </ligand>
</feature>
<feature type="binding site" evidence="4 13 14 15">
    <location>
        <position position="580"/>
    </location>
    <ligand>
        <name>Zn(2+)</name>
        <dbReference type="ChEBI" id="CHEBI:29105"/>
        <label>3</label>
    </ligand>
</feature>
<feature type="binding site" evidence="4 13 14 15">
    <location>
        <position position="582"/>
    </location>
    <ligand>
        <name>Zn(2+)</name>
        <dbReference type="ChEBI" id="CHEBI:29105"/>
        <label>3</label>
    </ligand>
</feature>
<feature type="binding site" evidence="4 13">
    <location>
        <position position="584"/>
    </location>
    <ligand>
        <name>Zn(2+)</name>
        <dbReference type="ChEBI" id="CHEBI:29105"/>
        <label>3</label>
    </ligand>
</feature>
<feature type="sequence conflict" description="In Ref. 1; CAA32925." evidence="10" ref="1">
    <original>Q</original>
    <variation>E</variation>
    <location>
        <position position="56"/>
    </location>
</feature>
<feature type="strand" evidence="18">
    <location>
        <begin position="4"/>
        <end position="10"/>
    </location>
</feature>
<feature type="helix" evidence="18">
    <location>
        <begin position="16"/>
        <end position="22"/>
    </location>
</feature>
<feature type="strand" evidence="18">
    <location>
        <begin position="24"/>
        <end position="26"/>
    </location>
</feature>
<feature type="strand" evidence="17">
    <location>
        <begin position="35"/>
        <end position="37"/>
    </location>
</feature>
<feature type="turn" evidence="18">
    <location>
        <begin position="47"/>
        <end position="49"/>
    </location>
</feature>
<feature type="strand" evidence="16">
    <location>
        <begin position="53"/>
        <end position="55"/>
    </location>
</feature>
<feature type="strand" evidence="18">
    <location>
        <begin position="59"/>
        <end position="62"/>
    </location>
</feature>
<feature type="turn" evidence="18">
    <location>
        <begin position="65"/>
        <end position="67"/>
    </location>
</feature>
<feature type="strand" evidence="18">
    <location>
        <begin position="73"/>
        <end position="82"/>
    </location>
</feature>
<feature type="helix" evidence="18">
    <location>
        <begin position="84"/>
        <end position="86"/>
    </location>
</feature>
<feature type="helix" evidence="18">
    <location>
        <begin position="87"/>
        <end position="95"/>
    </location>
</feature>
<feature type="turn" evidence="18">
    <location>
        <begin position="99"/>
        <end position="101"/>
    </location>
</feature>
<feature type="strand" evidence="17">
    <location>
        <begin position="104"/>
        <end position="106"/>
    </location>
</feature>
<feature type="helix" evidence="18">
    <location>
        <begin position="108"/>
        <end position="121"/>
    </location>
</feature>
<feature type="turn" evidence="18">
    <location>
        <begin position="122"/>
        <end position="124"/>
    </location>
</feature>
<feature type="helix" evidence="18">
    <location>
        <begin position="126"/>
        <end position="141"/>
    </location>
</feature>
<feature type="turn" evidence="18">
    <location>
        <begin position="147"/>
        <end position="149"/>
    </location>
</feature>
<feature type="strand" evidence="18">
    <location>
        <begin position="156"/>
        <end position="159"/>
    </location>
</feature>
<feature type="turn" evidence="18">
    <location>
        <begin position="160"/>
        <end position="162"/>
    </location>
</feature>
<feature type="strand" evidence="18">
    <location>
        <begin position="163"/>
        <end position="166"/>
    </location>
</feature>
<feature type="strand" evidence="16">
    <location>
        <begin position="168"/>
        <end position="171"/>
    </location>
</feature>
<feature type="helix" evidence="18">
    <location>
        <begin position="177"/>
        <end position="184"/>
    </location>
</feature>
<feature type="helix" evidence="18">
    <location>
        <begin position="189"/>
        <end position="194"/>
    </location>
</feature>
<feature type="turn" evidence="18">
    <location>
        <begin position="199"/>
        <end position="201"/>
    </location>
</feature>
<feature type="helix" evidence="18">
    <location>
        <begin position="204"/>
        <end position="207"/>
    </location>
</feature>
<feature type="strand" evidence="18">
    <location>
        <begin position="208"/>
        <end position="214"/>
    </location>
</feature>
<feature type="helix" evidence="18">
    <location>
        <begin position="217"/>
        <end position="219"/>
    </location>
</feature>
<feature type="helix" evidence="16">
    <location>
        <begin position="225"/>
        <end position="227"/>
    </location>
</feature>
<feature type="helix" evidence="18">
    <location>
        <begin position="234"/>
        <end position="254"/>
    </location>
</feature>
<feature type="helix" evidence="18">
    <location>
        <begin position="261"/>
        <end position="277"/>
    </location>
</feature>
<feature type="strand" evidence="18">
    <location>
        <begin position="288"/>
        <end position="292"/>
    </location>
</feature>
<feature type="helix" evidence="18">
    <location>
        <begin position="298"/>
        <end position="300"/>
    </location>
</feature>
<feature type="strand" evidence="18">
    <location>
        <begin position="303"/>
        <end position="307"/>
    </location>
</feature>
<feature type="helix" evidence="18">
    <location>
        <begin position="308"/>
        <end position="312"/>
    </location>
</feature>
<feature type="strand" evidence="18">
    <location>
        <begin position="316"/>
        <end position="328"/>
    </location>
</feature>
<feature type="strand" evidence="18">
    <location>
        <begin position="336"/>
        <end position="339"/>
    </location>
</feature>
<feature type="helix" evidence="18">
    <location>
        <begin position="341"/>
        <end position="346"/>
    </location>
</feature>
<feature type="strand" evidence="18">
    <location>
        <begin position="347"/>
        <end position="352"/>
    </location>
</feature>
<feature type="strand" evidence="18">
    <location>
        <begin position="355"/>
        <end position="357"/>
    </location>
</feature>
<feature type="helix" evidence="18">
    <location>
        <begin position="358"/>
        <end position="366"/>
    </location>
</feature>
<feature type="strand" evidence="18">
    <location>
        <begin position="371"/>
        <end position="373"/>
    </location>
</feature>
<feature type="strand" evidence="18">
    <location>
        <begin position="375"/>
        <end position="379"/>
    </location>
</feature>
<feature type="strand" evidence="18">
    <location>
        <begin position="385"/>
        <end position="387"/>
    </location>
</feature>
<feature type="helix" evidence="18">
    <location>
        <begin position="388"/>
        <end position="390"/>
    </location>
</feature>
<feature type="helix" evidence="18">
    <location>
        <begin position="394"/>
        <end position="399"/>
    </location>
</feature>
<feature type="strand" evidence="18">
    <location>
        <begin position="406"/>
        <end position="410"/>
    </location>
</feature>
<feature type="strand" evidence="18">
    <location>
        <begin position="416"/>
        <end position="420"/>
    </location>
</feature>
<feature type="helix" evidence="18">
    <location>
        <begin position="427"/>
        <end position="429"/>
    </location>
</feature>
<feature type="strand" evidence="18">
    <location>
        <begin position="430"/>
        <end position="437"/>
    </location>
</feature>
<feature type="strand" evidence="18">
    <location>
        <begin position="439"/>
        <end position="445"/>
    </location>
</feature>
<feature type="helix" evidence="18">
    <location>
        <begin position="447"/>
        <end position="449"/>
    </location>
</feature>
<feature type="helix" evidence="18">
    <location>
        <begin position="450"/>
        <end position="453"/>
    </location>
</feature>
<feature type="turn" evidence="18">
    <location>
        <begin position="457"/>
        <end position="459"/>
    </location>
</feature>
<feature type="strand" evidence="18">
    <location>
        <begin position="461"/>
        <end position="465"/>
    </location>
</feature>
<feature type="helix" evidence="18">
    <location>
        <begin position="470"/>
        <end position="479"/>
    </location>
</feature>
<feature type="helix" evidence="18">
    <location>
        <begin position="482"/>
        <end position="485"/>
    </location>
</feature>
<feature type="turn" evidence="18">
    <location>
        <begin position="489"/>
        <end position="492"/>
    </location>
</feature>
<feature type="strand" evidence="18">
    <location>
        <begin position="493"/>
        <end position="495"/>
    </location>
</feature>
<feature type="helix" evidence="18">
    <location>
        <begin position="501"/>
        <end position="510"/>
    </location>
</feature>
<feature type="helix" evidence="18">
    <location>
        <begin position="518"/>
        <end position="525"/>
    </location>
</feature>
<feature type="turn" evidence="17">
    <location>
        <begin position="527"/>
        <end position="529"/>
    </location>
</feature>
<feature type="strand" evidence="18">
    <location>
        <begin position="538"/>
        <end position="543"/>
    </location>
</feature>
<feature type="strand" evidence="18">
    <location>
        <begin position="545"/>
        <end position="547"/>
    </location>
</feature>
<feature type="helix" evidence="18">
    <location>
        <begin position="548"/>
        <end position="552"/>
    </location>
</feature>
<feature type="helix" evidence="18">
    <location>
        <begin position="553"/>
        <end position="555"/>
    </location>
</feature>
<feature type="strand" evidence="18">
    <location>
        <begin position="562"/>
        <end position="565"/>
    </location>
</feature>
<feature type="helix" evidence="18">
    <location>
        <begin position="567"/>
        <end position="570"/>
    </location>
</feature>
<feature type="strand" evidence="18">
    <location>
        <begin position="576"/>
        <end position="578"/>
    </location>
</feature>
<feature type="strand" evidence="16">
    <location>
        <begin position="581"/>
        <end position="583"/>
    </location>
</feature>
<feature type="strand" evidence="18">
    <location>
        <begin position="585"/>
        <end position="591"/>
    </location>
</feature>
<feature type="strand" evidence="18">
    <location>
        <begin position="593"/>
        <end position="595"/>
    </location>
</feature>
<feature type="helix" evidence="18">
    <location>
        <begin position="600"/>
        <end position="603"/>
    </location>
</feature>
<feature type="helix" evidence="18">
    <location>
        <begin position="611"/>
        <end position="619"/>
    </location>
</feature>
<feature type="helix" evidence="18">
    <location>
        <begin position="621"/>
        <end position="642"/>
    </location>
</feature>
<feature type="helix" evidence="18">
    <location>
        <begin position="648"/>
        <end position="651"/>
    </location>
</feature>
<feature type="helix" evidence="18">
    <location>
        <begin position="655"/>
        <end position="680"/>
    </location>
</feature>
<feature type="turn" evidence="18">
    <location>
        <begin position="692"/>
        <end position="694"/>
    </location>
</feature>
<feature type="helix" evidence="18">
    <location>
        <begin position="695"/>
        <end position="717"/>
    </location>
</feature>
<feature type="strand" evidence="16">
    <location>
        <begin position="721"/>
        <end position="723"/>
    </location>
</feature>
<feature type="helix" evidence="18">
    <location>
        <begin position="724"/>
        <end position="730"/>
    </location>
</feature>
<feature type="helix" evidence="18">
    <location>
        <begin position="737"/>
        <end position="744"/>
    </location>
</feature>
<feature type="strand" evidence="18">
    <location>
        <begin position="764"/>
        <end position="766"/>
    </location>
</feature>
<feature type="helix" evidence="18">
    <location>
        <begin position="776"/>
        <end position="779"/>
    </location>
</feature>
<feature type="turn" evidence="18">
    <location>
        <begin position="786"/>
        <end position="788"/>
    </location>
</feature>
<feature type="helix" evidence="18">
    <location>
        <begin position="792"/>
        <end position="801"/>
    </location>
</feature>
<feature type="helix" evidence="18">
    <location>
        <begin position="803"/>
        <end position="805"/>
    </location>
</feature>
<feature type="helix" evidence="18">
    <location>
        <begin position="814"/>
        <end position="827"/>
    </location>
</feature>
<feature type="strand" evidence="18">
    <location>
        <begin position="830"/>
        <end position="832"/>
    </location>
</feature>
<feature type="strand" evidence="18">
    <location>
        <begin position="838"/>
        <end position="840"/>
    </location>
</feature>
<feature type="strand" evidence="18">
    <location>
        <begin position="845"/>
        <end position="850"/>
    </location>
</feature>
<feature type="turn" evidence="18">
    <location>
        <begin position="851"/>
        <end position="853"/>
    </location>
</feature>
<feature type="strand" evidence="18">
    <location>
        <begin position="859"/>
        <end position="863"/>
    </location>
</feature>
<feature type="helix" evidence="18">
    <location>
        <begin position="868"/>
        <end position="876"/>
    </location>
</feature>
<feature type="turn" evidence="18">
    <location>
        <begin position="877"/>
        <end position="879"/>
    </location>
</feature>
<reference key="1">
    <citation type="journal article" date="1989" name="Nucleic Acids Res.">
        <title>Organization and nucleotide sequence of the genes encoding the large subunits A, B and C of the DNA-dependent RNA polymerase of the archaebacterium Sulfolobus acidocaldarius.</title>
        <authorList>
            <person name="Puehler G."/>
            <person name="Lottspeich F."/>
            <person name="Zillig W."/>
        </authorList>
    </citation>
    <scope>NUCLEOTIDE SEQUENCE [GENOMIC DNA]</scope>
    <source>
        <strain>ATCC 33909 / DSM 639 / JCM 8929 / NBRC 15157 / NCIMB 11770</strain>
    </source>
</reference>
<reference key="2">
    <citation type="journal article" date="2005" name="J. Bacteriol.">
        <title>The genome of Sulfolobus acidocaldarius, a model organism of the Crenarchaeota.</title>
        <authorList>
            <person name="Chen L."/>
            <person name="Bruegger K."/>
            <person name="Skovgaard M."/>
            <person name="Redder P."/>
            <person name="She Q."/>
            <person name="Torarinsson E."/>
            <person name="Greve B."/>
            <person name="Awayez M."/>
            <person name="Zibat A."/>
            <person name="Klenk H.-P."/>
            <person name="Garrett R.A."/>
        </authorList>
    </citation>
    <scope>NUCLEOTIDE SEQUENCE [LARGE SCALE GENOMIC DNA]</scope>
    <source>
        <strain>ATCC 33909 / DSM 639 / JCM 8929 / NBRC 15157 / NCIMB 11770</strain>
    </source>
</reference>
<reference key="3">
    <citation type="journal article" date="1992" name="Proc. Natl. Acad. Sci. U.S.A.">
        <title>Component H of the DNA-dependent RNA polymerases of Archaea is homologous to a subunit shared by the three eucaryal nuclear RNA polymerases.</title>
        <authorList>
            <person name="Klenk H.-P."/>
            <person name="Palm P."/>
            <person name="Lottspeich F."/>
            <person name="Zillig W."/>
        </authorList>
    </citation>
    <scope>SUBUNIT</scope>
    <source>
        <strain>ATCC 33909 / DSM 639 / JCM 8929 / NBRC 15157 / NCIMB 11770</strain>
    </source>
</reference>
<reference key="4">
    <citation type="journal article" date="1994" name="Syst. Appl. Microbiol.">
        <title>Structure and Function of the DNA-Dependent RNA Polymerase of Sulfolobus.</title>
        <authorList>
            <person name="Lanzendorfer M."/>
            <person name="Langer D."/>
            <person name="Hain J."/>
            <person name="Klenk H.-P."/>
            <person name="Holz I."/>
            <person name="Arnold-Ammer I."/>
            <person name="Zillig W."/>
        </authorList>
    </citation>
    <scope>FUNCTION</scope>
    <scope>CATALYTIC ACTIVITY</scope>
    <scope>ZINC COFACTOR</scope>
    <scope>SUBUNIT</scope>
    <source>
        <strain>ATCC 33909 / DSM 639 / JCM 8929 / NBRC 15157 / NCIMB 11770</strain>
    </source>
</reference>
<reference evidence="13 14 15" key="5">
    <citation type="journal article" date="2021" name="Nat. Commun.">
        <title>Structural basis of RNA polymerase inhibition by viral and host factors.</title>
        <authorList>
            <person name="Pilotto S."/>
            <person name="Fouqueau T."/>
            <person name="Lukoyanova N."/>
            <person name="Sheppard C."/>
            <person name="Lucas-Staat S."/>
            <person name="Diaz-Santin L.M."/>
            <person name="Matelska D."/>
            <person name="Prangishvili D."/>
            <person name="Cheung A.C.M."/>
            <person name="Werner F."/>
        </authorList>
    </citation>
    <scope>STRUCTURE BY ELECTRON MICROSCOPY (2.61 ANGSTROMS) OF RNAP WITH AND WITHOUT INHIBITORS</scope>
    <scope>FUNCTION</scope>
    <scope>ACTIVITY REGULATION (MICROBIAL INFECTION)</scope>
    <scope>MAGNESIUM AND ZINC COFACTORS</scope>
    <scope>INTERACTION WITH TFS4</scope>
    <scope>INTERACTION WITH VIRAL RIP (MICROBIAL INFECTION)</scope>
    <scope>SUBUNIT</scope>
    <source>
        <strain>ATCC 33909 / DSM 639 / JCM 8929 / NBRC 15157 / NCIMB 11770</strain>
    </source>
</reference>
<dbReference type="EC" id="2.7.7.6" evidence="1 5"/>
<dbReference type="EMBL" id="X14818">
    <property type="protein sequence ID" value="CAA32925.1"/>
    <property type="molecule type" value="Genomic_DNA"/>
</dbReference>
<dbReference type="EMBL" id="CP000077">
    <property type="protein sequence ID" value="AAY80072.1"/>
    <property type="molecule type" value="Genomic_DNA"/>
</dbReference>
<dbReference type="PIR" id="B33926">
    <property type="entry name" value="B33926"/>
</dbReference>
<dbReference type="RefSeq" id="WP_011277574.1">
    <property type="nucleotide sequence ID" value="NC_007181.1"/>
</dbReference>
<dbReference type="PDB" id="7OK0">
    <property type="method" value="EM"/>
    <property type="resolution" value="2.90 A"/>
    <property type="chains" value="A=1-880"/>
</dbReference>
<dbReference type="PDB" id="7OQ4">
    <property type="method" value="EM"/>
    <property type="resolution" value="3.27 A"/>
    <property type="chains" value="A=1-880"/>
</dbReference>
<dbReference type="PDB" id="7OQY">
    <property type="method" value="EM"/>
    <property type="resolution" value="2.61 A"/>
    <property type="chains" value="A=1-880"/>
</dbReference>
<dbReference type="PDBsum" id="7OK0"/>
<dbReference type="PDBsum" id="7OQ4"/>
<dbReference type="PDBsum" id="7OQY"/>
<dbReference type="EMDB" id="EMD-12960"/>
<dbReference type="EMDB" id="EMD-13026"/>
<dbReference type="EMDB" id="EMD-13034"/>
<dbReference type="SMR" id="P11512"/>
<dbReference type="STRING" id="330779.Saci_0692"/>
<dbReference type="GeneID" id="14551207"/>
<dbReference type="GeneID" id="78441034"/>
<dbReference type="KEGG" id="sai:Saci_0692"/>
<dbReference type="PATRIC" id="fig|330779.12.peg.660"/>
<dbReference type="eggNOG" id="arCOG04257">
    <property type="taxonomic scope" value="Archaea"/>
</dbReference>
<dbReference type="HOGENOM" id="CLU_000487_3_1_2"/>
<dbReference type="Proteomes" id="UP000001018">
    <property type="component" value="Chromosome"/>
</dbReference>
<dbReference type="GO" id="GO:0005737">
    <property type="term" value="C:cytoplasm"/>
    <property type="evidence" value="ECO:0007669"/>
    <property type="project" value="UniProtKB-SubCell"/>
</dbReference>
<dbReference type="GO" id="GO:0000428">
    <property type="term" value="C:DNA-directed RNA polymerase complex"/>
    <property type="evidence" value="ECO:0000314"/>
    <property type="project" value="UniProtKB"/>
</dbReference>
<dbReference type="GO" id="GO:0003677">
    <property type="term" value="F:DNA binding"/>
    <property type="evidence" value="ECO:0007669"/>
    <property type="project" value="UniProtKB-UniRule"/>
</dbReference>
<dbReference type="GO" id="GO:0003899">
    <property type="term" value="F:DNA-directed RNA polymerase activity"/>
    <property type="evidence" value="ECO:0000314"/>
    <property type="project" value="UniProtKB"/>
</dbReference>
<dbReference type="GO" id="GO:0000287">
    <property type="term" value="F:magnesium ion binding"/>
    <property type="evidence" value="ECO:0007669"/>
    <property type="project" value="UniProtKB-UniRule"/>
</dbReference>
<dbReference type="GO" id="GO:0008270">
    <property type="term" value="F:zinc ion binding"/>
    <property type="evidence" value="ECO:0007669"/>
    <property type="project" value="UniProtKB-UniRule"/>
</dbReference>
<dbReference type="GO" id="GO:0006351">
    <property type="term" value="P:DNA-templated transcription"/>
    <property type="evidence" value="ECO:0000314"/>
    <property type="project" value="UniProtKB"/>
</dbReference>
<dbReference type="CDD" id="cd02582">
    <property type="entry name" value="RNAP_archeal_A"/>
    <property type="match status" value="1"/>
</dbReference>
<dbReference type="FunFam" id="2.40.40.20:FF:000019">
    <property type="entry name" value="DNA-directed RNA polymerase II subunit RPB1"/>
    <property type="match status" value="1"/>
</dbReference>
<dbReference type="Gene3D" id="1.10.10.1950">
    <property type="match status" value="1"/>
</dbReference>
<dbReference type="Gene3D" id="1.10.132.30">
    <property type="match status" value="1"/>
</dbReference>
<dbReference type="Gene3D" id="2.40.40.20">
    <property type="match status" value="1"/>
</dbReference>
<dbReference type="Gene3D" id="2.60.40.2940">
    <property type="match status" value="1"/>
</dbReference>
<dbReference type="Gene3D" id="4.10.320.40">
    <property type="match status" value="1"/>
</dbReference>
<dbReference type="Gene3D" id="6.10.250.2940">
    <property type="match status" value="1"/>
</dbReference>
<dbReference type="Gene3D" id="6.20.50.80">
    <property type="match status" value="1"/>
</dbReference>
<dbReference type="Gene3D" id="3.30.1490.180">
    <property type="entry name" value="RNA polymerase ii"/>
    <property type="match status" value="1"/>
</dbReference>
<dbReference type="Gene3D" id="4.10.860.120">
    <property type="entry name" value="RNA polymerase II, clamp domain"/>
    <property type="match status" value="2"/>
</dbReference>
<dbReference type="HAMAP" id="MF_00863">
    <property type="entry name" value="RNApol_arch_Rpo1N"/>
    <property type="match status" value="1"/>
</dbReference>
<dbReference type="InterPro" id="IPR045867">
    <property type="entry name" value="DNA-dir_RpoC_beta_prime"/>
</dbReference>
<dbReference type="InterPro" id="IPR000722">
    <property type="entry name" value="RNA_pol_asu"/>
</dbReference>
<dbReference type="InterPro" id="IPR006592">
    <property type="entry name" value="RNA_pol_N"/>
</dbReference>
<dbReference type="InterPro" id="IPR007080">
    <property type="entry name" value="RNA_pol_Rpb1_1"/>
</dbReference>
<dbReference type="InterPro" id="IPR007066">
    <property type="entry name" value="RNA_pol_Rpb1_3"/>
</dbReference>
<dbReference type="InterPro" id="IPR007083">
    <property type="entry name" value="RNA_pol_Rpb1_4"/>
</dbReference>
<dbReference type="InterPro" id="IPR007081">
    <property type="entry name" value="RNA_pol_Rpb1_5"/>
</dbReference>
<dbReference type="InterPro" id="IPR044893">
    <property type="entry name" value="RNA_pol_Rpb1_clamp_domain"/>
</dbReference>
<dbReference type="InterPro" id="IPR038120">
    <property type="entry name" value="Rpb1_funnel_sf"/>
</dbReference>
<dbReference type="InterPro" id="IPR012758">
    <property type="entry name" value="RPO1N"/>
</dbReference>
<dbReference type="NCBIfam" id="NF006336">
    <property type="entry name" value="PRK08566.1"/>
    <property type="match status" value="1"/>
</dbReference>
<dbReference type="NCBIfam" id="TIGR02390">
    <property type="entry name" value="RNA_pol_rpoA1"/>
    <property type="match status" value="1"/>
</dbReference>
<dbReference type="PANTHER" id="PTHR19376">
    <property type="entry name" value="DNA-DIRECTED RNA POLYMERASE"/>
    <property type="match status" value="1"/>
</dbReference>
<dbReference type="PANTHER" id="PTHR19376:SF32">
    <property type="entry name" value="DNA-DIRECTED RNA POLYMERASE III SUBUNIT RPC1"/>
    <property type="match status" value="1"/>
</dbReference>
<dbReference type="Pfam" id="PF04997">
    <property type="entry name" value="RNA_pol_Rpb1_1"/>
    <property type="match status" value="1"/>
</dbReference>
<dbReference type="Pfam" id="PF00623">
    <property type="entry name" value="RNA_pol_Rpb1_2"/>
    <property type="match status" value="1"/>
</dbReference>
<dbReference type="Pfam" id="PF04983">
    <property type="entry name" value="RNA_pol_Rpb1_3"/>
    <property type="match status" value="1"/>
</dbReference>
<dbReference type="Pfam" id="PF05000">
    <property type="entry name" value="RNA_pol_Rpb1_4"/>
    <property type="match status" value="1"/>
</dbReference>
<dbReference type="Pfam" id="PF04998">
    <property type="entry name" value="RNA_pol_Rpb1_5"/>
    <property type="match status" value="1"/>
</dbReference>
<dbReference type="SMART" id="SM00663">
    <property type="entry name" value="RPOLA_N"/>
    <property type="match status" value="1"/>
</dbReference>
<dbReference type="SUPFAM" id="SSF64484">
    <property type="entry name" value="beta and beta-prime subunits of DNA dependent RNA-polymerase"/>
    <property type="match status" value="1"/>
</dbReference>